<organism>
    <name type="scientific">Halobacterium salinarum (strain ATCC 700922 / JCM 11081 / NRC-1)</name>
    <name type="common">Halobacterium halobium</name>
    <dbReference type="NCBI Taxonomy" id="64091"/>
    <lineage>
        <taxon>Archaea</taxon>
        <taxon>Methanobacteriati</taxon>
        <taxon>Methanobacteriota</taxon>
        <taxon>Stenosarchaea group</taxon>
        <taxon>Halobacteria</taxon>
        <taxon>Halobacteriales</taxon>
        <taxon>Halobacteriaceae</taxon>
        <taxon>Halobacterium</taxon>
        <taxon>Halobacterium salinarum NRC-34001</taxon>
    </lineage>
</organism>
<proteinExistence type="inferred from homology"/>
<gene>
    <name evidence="1" type="primary">cbiT</name>
    <name type="ordered locus">VNG_1550G</name>
</gene>
<name>CBIT_HALSA</name>
<dbReference type="EC" id="2.1.1.196" evidence="1"/>
<dbReference type="EMBL" id="AE004437">
    <property type="protein sequence ID" value="AAG19833.1"/>
    <property type="molecule type" value="Genomic_DNA"/>
</dbReference>
<dbReference type="PIR" id="E84308">
    <property type="entry name" value="E84308"/>
</dbReference>
<dbReference type="RefSeq" id="WP_010903131.1">
    <property type="nucleotide sequence ID" value="NC_002607.1"/>
</dbReference>
<dbReference type="SMR" id="Q9HPN4"/>
<dbReference type="FunCoup" id="Q9HPN4">
    <property type="interactions" value="67"/>
</dbReference>
<dbReference type="STRING" id="64091.VNG_1550G"/>
<dbReference type="PaxDb" id="64091-VNG_1550G"/>
<dbReference type="GeneID" id="89349833"/>
<dbReference type="KEGG" id="hal:VNG_1550G"/>
<dbReference type="PATRIC" id="fig|64091.14.peg.1186"/>
<dbReference type="HOGENOM" id="CLU_094143_1_0_2"/>
<dbReference type="InParanoid" id="Q9HPN4"/>
<dbReference type="OrthoDB" id="6027at2157"/>
<dbReference type="PhylomeDB" id="Q9HPN4"/>
<dbReference type="UniPathway" id="UPA00148">
    <property type="reaction ID" value="UER00229"/>
</dbReference>
<dbReference type="Proteomes" id="UP000000554">
    <property type="component" value="Chromosome"/>
</dbReference>
<dbReference type="GO" id="GO:0043776">
    <property type="term" value="F:cobalt-precorrin-6B C5-methyltransferase activity"/>
    <property type="evidence" value="ECO:0007669"/>
    <property type="project" value="RHEA"/>
</dbReference>
<dbReference type="GO" id="GO:0008276">
    <property type="term" value="F:protein methyltransferase activity"/>
    <property type="evidence" value="ECO:0007669"/>
    <property type="project" value="InterPro"/>
</dbReference>
<dbReference type="GO" id="GO:0019251">
    <property type="term" value="P:anaerobic cobalamin biosynthetic process"/>
    <property type="evidence" value="ECO:0007669"/>
    <property type="project" value="UniProtKB-UniRule"/>
</dbReference>
<dbReference type="GO" id="GO:0032259">
    <property type="term" value="P:methylation"/>
    <property type="evidence" value="ECO:0007669"/>
    <property type="project" value="UniProtKB-KW"/>
</dbReference>
<dbReference type="Gene3D" id="3.40.50.150">
    <property type="entry name" value="Vaccinia Virus protein VP39"/>
    <property type="match status" value="1"/>
</dbReference>
<dbReference type="HAMAP" id="MF_00786">
    <property type="entry name" value="CbiT"/>
    <property type="match status" value="1"/>
</dbReference>
<dbReference type="InterPro" id="IPR023475">
    <property type="entry name" value="CbiT"/>
</dbReference>
<dbReference type="InterPro" id="IPR014008">
    <property type="entry name" value="Cbl_synth_MTase_CbiT"/>
</dbReference>
<dbReference type="InterPro" id="IPR050714">
    <property type="entry name" value="Cobalamin_biosynth_MTase"/>
</dbReference>
<dbReference type="InterPro" id="IPR029063">
    <property type="entry name" value="SAM-dependent_MTases_sf"/>
</dbReference>
<dbReference type="NCBIfam" id="TIGR02469">
    <property type="entry name" value="CbiT"/>
    <property type="match status" value="1"/>
</dbReference>
<dbReference type="PANTHER" id="PTHR43182">
    <property type="entry name" value="COBALT-PRECORRIN-6B C(15)-METHYLTRANSFERASE (DECARBOXYLATING)"/>
    <property type="match status" value="1"/>
</dbReference>
<dbReference type="PANTHER" id="PTHR43182:SF1">
    <property type="entry name" value="COBALT-PRECORRIN-7 C(5)-METHYLTRANSFERASE"/>
    <property type="match status" value="1"/>
</dbReference>
<dbReference type="SUPFAM" id="SSF53335">
    <property type="entry name" value="S-adenosyl-L-methionine-dependent methyltransferases"/>
    <property type="match status" value="1"/>
</dbReference>
<feature type="chain" id="PRO_0000134936" description="Probable cobalt-precorrin-6B C(15)-methyltransferase (decarboxylating)">
    <location>
        <begin position="1"/>
        <end position="187"/>
    </location>
</feature>
<feature type="binding site" evidence="1">
    <location>
        <position position="15"/>
    </location>
    <ligand>
        <name>S-adenosyl-L-methionine</name>
        <dbReference type="ChEBI" id="CHEBI:59789"/>
    </ligand>
</feature>
<feature type="binding site" evidence="1">
    <location>
        <begin position="39"/>
        <end position="43"/>
    </location>
    <ligand>
        <name>S-adenosyl-L-methionine</name>
        <dbReference type="ChEBI" id="CHEBI:59789"/>
    </ligand>
</feature>
<feature type="binding site" evidence="1">
    <location>
        <position position="60"/>
    </location>
    <ligand>
        <name>S-adenosyl-L-methionine</name>
        <dbReference type="ChEBI" id="CHEBI:59789"/>
    </ligand>
</feature>
<feature type="binding site" evidence="1">
    <location>
        <position position="89"/>
    </location>
    <ligand>
        <name>S-adenosyl-L-methionine</name>
        <dbReference type="ChEBI" id="CHEBI:59789"/>
    </ligand>
</feature>
<accession>Q9HPN4</accession>
<evidence type="ECO:0000255" key="1">
    <source>
        <dbReference type="HAMAP-Rule" id="MF_00786"/>
    </source>
</evidence>
<comment type="function">
    <text evidence="1">Catalyzes the methylation of C-15 in cobalt-precorrin-6B followed by the decarboxylation of C-12 to form cobalt-precorrin-7.</text>
</comment>
<comment type="catalytic activity">
    <reaction evidence="1">
        <text>Co-precorrin-6B + S-adenosyl-L-methionine = Co-precorrin-7 + S-adenosyl-L-homocysteine + CO2</text>
        <dbReference type="Rhea" id="RHEA:36067"/>
        <dbReference type="ChEBI" id="CHEBI:16526"/>
        <dbReference type="ChEBI" id="CHEBI:57856"/>
        <dbReference type="ChEBI" id="CHEBI:59789"/>
        <dbReference type="ChEBI" id="CHEBI:70791"/>
        <dbReference type="ChEBI" id="CHEBI:72780"/>
        <dbReference type="EC" id="2.1.1.196"/>
    </reaction>
</comment>
<comment type="pathway">
    <text evidence="1">Cofactor biosynthesis; adenosylcobalamin biosynthesis; cob(II)yrinate a,c-diamide from sirohydrochlorin (anaerobic route): step 8/10.</text>
</comment>
<comment type="similarity">
    <text evidence="1">Belongs to the methyltransferase superfamily. Archaeal-type CbiT family.</text>
</comment>
<sequence length="187" mass="19779">MAQTQLPHDAKAGPTKPEVRAVVRSKLALTDDDHFVEVGSCTGAVTIAAARDAGRVTALERKADRLETTRKNLAANGLADAVELRNAEAPAELPADADALFIGGSRNYDAVLDHAAETGVDRIVMNVSRLEVAGAATQAFRDRDILTEVVQFQVSHGYELAGATSFDSENPVYMLVGSASGDTEADR</sequence>
<keyword id="KW-0169">Cobalamin biosynthesis</keyword>
<keyword id="KW-0489">Methyltransferase</keyword>
<keyword id="KW-1185">Reference proteome</keyword>
<keyword id="KW-0949">S-adenosyl-L-methionine</keyword>
<keyword id="KW-0808">Transferase</keyword>
<protein>
    <recommendedName>
        <fullName evidence="1">Probable cobalt-precorrin-6B C(15)-methyltransferase (decarboxylating)</fullName>
        <ecNumber evidence="1">2.1.1.196</ecNumber>
    </recommendedName>
</protein>
<reference key="1">
    <citation type="journal article" date="2000" name="Proc. Natl. Acad. Sci. U.S.A.">
        <title>Genome sequence of Halobacterium species NRC-1.</title>
        <authorList>
            <person name="Ng W.V."/>
            <person name="Kennedy S.P."/>
            <person name="Mahairas G.G."/>
            <person name="Berquist B."/>
            <person name="Pan M."/>
            <person name="Shukla H.D."/>
            <person name="Lasky S.R."/>
            <person name="Baliga N.S."/>
            <person name="Thorsson V."/>
            <person name="Sbrogna J."/>
            <person name="Swartzell S."/>
            <person name="Weir D."/>
            <person name="Hall J."/>
            <person name="Dahl T.A."/>
            <person name="Welti R."/>
            <person name="Goo Y.A."/>
            <person name="Leithauser B."/>
            <person name="Keller K."/>
            <person name="Cruz R."/>
            <person name="Danson M.J."/>
            <person name="Hough D.W."/>
            <person name="Maddocks D.G."/>
            <person name="Jablonski P.E."/>
            <person name="Krebs M.P."/>
            <person name="Angevine C.M."/>
            <person name="Dale H."/>
            <person name="Isenbarger T.A."/>
            <person name="Peck R.F."/>
            <person name="Pohlschroder M."/>
            <person name="Spudich J.L."/>
            <person name="Jung K.-H."/>
            <person name="Alam M."/>
            <person name="Freitas T."/>
            <person name="Hou S."/>
            <person name="Daniels C.J."/>
            <person name="Dennis P.P."/>
            <person name="Omer A.D."/>
            <person name="Ebhardt H."/>
            <person name="Lowe T.M."/>
            <person name="Liang P."/>
            <person name="Riley M."/>
            <person name="Hood L."/>
            <person name="DasSarma S."/>
        </authorList>
    </citation>
    <scope>NUCLEOTIDE SEQUENCE [LARGE SCALE GENOMIC DNA]</scope>
    <source>
        <strain>ATCC 700922 / JCM 11081 / NRC-1</strain>
    </source>
</reference>